<dbReference type="EMBL" id="BA000019">
    <property type="protein sequence ID" value="BAB75892.1"/>
    <property type="molecule type" value="Genomic_DNA"/>
</dbReference>
<dbReference type="PIR" id="AB2330">
    <property type="entry name" value="AB2330"/>
</dbReference>
<dbReference type="RefSeq" id="WP_010998332.1">
    <property type="nucleotide sequence ID" value="NZ_RSCN01000010.1"/>
</dbReference>
<dbReference type="SMR" id="Q8YPK1"/>
<dbReference type="STRING" id="103690.gene:10496242"/>
<dbReference type="KEGG" id="ana:all4193"/>
<dbReference type="eggNOG" id="COG0099">
    <property type="taxonomic scope" value="Bacteria"/>
</dbReference>
<dbReference type="OrthoDB" id="9803610at2"/>
<dbReference type="Proteomes" id="UP000002483">
    <property type="component" value="Chromosome"/>
</dbReference>
<dbReference type="GO" id="GO:0005829">
    <property type="term" value="C:cytosol"/>
    <property type="evidence" value="ECO:0007669"/>
    <property type="project" value="TreeGrafter"/>
</dbReference>
<dbReference type="GO" id="GO:0015935">
    <property type="term" value="C:small ribosomal subunit"/>
    <property type="evidence" value="ECO:0007669"/>
    <property type="project" value="TreeGrafter"/>
</dbReference>
<dbReference type="GO" id="GO:0019843">
    <property type="term" value="F:rRNA binding"/>
    <property type="evidence" value="ECO:0007669"/>
    <property type="project" value="UniProtKB-UniRule"/>
</dbReference>
<dbReference type="GO" id="GO:0003735">
    <property type="term" value="F:structural constituent of ribosome"/>
    <property type="evidence" value="ECO:0007669"/>
    <property type="project" value="InterPro"/>
</dbReference>
<dbReference type="GO" id="GO:0000049">
    <property type="term" value="F:tRNA binding"/>
    <property type="evidence" value="ECO:0007669"/>
    <property type="project" value="UniProtKB-UniRule"/>
</dbReference>
<dbReference type="GO" id="GO:0006412">
    <property type="term" value="P:translation"/>
    <property type="evidence" value="ECO:0007669"/>
    <property type="project" value="UniProtKB-UniRule"/>
</dbReference>
<dbReference type="FunFam" id="1.10.8.50:FF:000001">
    <property type="entry name" value="30S ribosomal protein S13"/>
    <property type="match status" value="1"/>
</dbReference>
<dbReference type="FunFam" id="4.10.910.10:FF:000001">
    <property type="entry name" value="30S ribosomal protein S13"/>
    <property type="match status" value="1"/>
</dbReference>
<dbReference type="Gene3D" id="1.10.8.50">
    <property type="match status" value="1"/>
</dbReference>
<dbReference type="Gene3D" id="4.10.910.10">
    <property type="entry name" value="30s ribosomal protein s13, domain 2"/>
    <property type="match status" value="1"/>
</dbReference>
<dbReference type="HAMAP" id="MF_01315">
    <property type="entry name" value="Ribosomal_uS13"/>
    <property type="match status" value="1"/>
</dbReference>
<dbReference type="InterPro" id="IPR027437">
    <property type="entry name" value="Rbsml_uS13_C"/>
</dbReference>
<dbReference type="InterPro" id="IPR001892">
    <property type="entry name" value="Ribosomal_uS13"/>
</dbReference>
<dbReference type="InterPro" id="IPR010979">
    <property type="entry name" value="Ribosomal_uS13-like_H2TH"/>
</dbReference>
<dbReference type="InterPro" id="IPR019980">
    <property type="entry name" value="Ribosomal_uS13_bac-type"/>
</dbReference>
<dbReference type="InterPro" id="IPR018269">
    <property type="entry name" value="Ribosomal_uS13_CS"/>
</dbReference>
<dbReference type="NCBIfam" id="TIGR03631">
    <property type="entry name" value="uS13_bact"/>
    <property type="match status" value="1"/>
</dbReference>
<dbReference type="PANTHER" id="PTHR10871">
    <property type="entry name" value="30S RIBOSOMAL PROTEIN S13/40S RIBOSOMAL PROTEIN S18"/>
    <property type="match status" value="1"/>
</dbReference>
<dbReference type="PANTHER" id="PTHR10871:SF1">
    <property type="entry name" value="SMALL RIBOSOMAL SUBUNIT PROTEIN US13M"/>
    <property type="match status" value="1"/>
</dbReference>
<dbReference type="Pfam" id="PF00416">
    <property type="entry name" value="Ribosomal_S13"/>
    <property type="match status" value="1"/>
</dbReference>
<dbReference type="PIRSF" id="PIRSF002134">
    <property type="entry name" value="Ribosomal_S13"/>
    <property type="match status" value="1"/>
</dbReference>
<dbReference type="SUPFAM" id="SSF46946">
    <property type="entry name" value="S13-like H2TH domain"/>
    <property type="match status" value="1"/>
</dbReference>
<dbReference type="PROSITE" id="PS00646">
    <property type="entry name" value="RIBOSOMAL_S13_1"/>
    <property type="match status" value="1"/>
</dbReference>
<dbReference type="PROSITE" id="PS50159">
    <property type="entry name" value="RIBOSOMAL_S13_2"/>
    <property type="match status" value="1"/>
</dbReference>
<reference key="1">
    <citation type="journal article" date="2001" name="DNA Res.">
        <title>Complete genomic sequence of the filamentous nitrogen-fixing cyanobacterium Anabaena sp. strain PCC 7120.</title>
        <authorList>
            <person name="Kaneko T."/>
            <person name="Nakamura Y."/>
            <person name="Wolk C.P."/>
            <person name="Kuritz T."/>
            <person name="Sasamoto S."/>
            <person name="Watanabe A."/>
            <person name="Iriguchi M."/>
            <person name="Ishikawa A."/>
            <person name="Kawashima K."/>
            <person name="Kimura T."/>
            <person name="Kishida Y."/>
            <person name="Kohara M."/>
            <person name="Matsumoto M."/>
            <person name="Matsuno A."/>
            <person name="Muraki A."/>
            <person name="Nakazaki N."/>
            <person name="Shimpo S."/>
            <person name="Sugimoto M."/>
            <person name="Takazawa M."/>
            <person name="Yamada M."/>
            <person name="Yasuda M."/>
            <person name="Tabata S."/>
        </authorList>
    </citation>
    <scope>NUCLEOTIDE SEQUENCE [LARGE SCALE GENOMIC DNA]</scope>
    <source>
        <strain>PCC 7120 / SAG 25.82 / UTEX 2576</strain>
    </source>
</reference>
<keyword id="KW-1185">Reference proteome</keyword>
<keyword id="KW-0687">Ribonucleoprotein</keyword>
<keyword id="KW-0689">Ribosomal protein</keyword>
<keyword id="KW-0694">RNA-binding</keyword>
<keyword id="KW-0699">rRNA-binding</keyword>
<keyword id="KW-0820">tRNA-binding</keyword>
<comment type="function">
    <text evidence="1">Located at the top of the head of the 30S subunit, it contacts several helices of the 16S rRNA. In the 70S ribosome it contacts the 23S rRNA (bridge B1a) and protein L5 of the 50S subunit (bridge B1b), connecting the 2 subunits; these bridges are implicated in subunit movement. Contacts the tRNAs in the A and P-sites.</text>
</comment>
<comment type="subunit">
    <text evidence="1">Part of the 30S ribosomal subunit. Forms a loose heterodimer with protein S19. Forms two bridges to the 50S subunit in the 70S ribosome.</text>
</comment>
<comment type="similarity">
    <text evidence="1">Belongs to the universal ribosomal protein uS13 family.</text>
</comment>
<protein>
    <recommendedName>
        <fullName evidence="1">Small ribosomal subunit protein uS13</fullName>
    </recommendedName>
    <alternativeName>
        <fullName evidence="3">30S ribosomal protein S13</fullName>
    </alternativeName>
</protein>
<proteinExistence type="inferred from homology"/>
<evidence type="ECO:0000255" key="1">
    <source>
        <dbReference type="HAMAP-Rule" id="MF_01315"/>
    </source>
</evidence>
<evidence type="ECO:0000256" key="2">
    <source>
        <dbReference type="SAM" id="MobiDB-lite"/>
    </source>
</evidence>
<evidence type="ECO:0000305" key="3"/>
<organism>
    <name type="scientific">Nostoc sp. (strain PCC 7120 / SAG 25.82 / UTEX 2576)</name>
    <dbReference type="NCBI Taxonomy" id="103690"/>
    <lineage>
        <taxon>Bacteria</taxon>
        <taxon>Bacillati</taxon>
        <taxon>Cyanobacteriota</taxon>
        <taxon>Cyanophyceae</taxon>
        <taxon>Nostocales</taxon>
        <taxon>Nostocaceae</taxon>
        <taxon>Nostoc</taxon>
    </lineage>
</organism>
<sequence length="126" mass="14084">MARIAGVDLPRDKRVEIGLTYIYGIGLSRSQEIIAATGVNPDTRVKDLSDADVAALRGEVESNYQVEGDLRRLEAMNIKRLVDIGTYRGRRHRMGLPVRGQRTRTNARTRRGRRQTVAGKKKAPGK</sequence>
<gene>
    <name evidence="1" type="primary">rpsM</name>
    <name evidence="1" type="synonym">rps13</name>
    <name type="ordered locus">all4193</name>
</gene>
<name>RS13_NOSS1</name>
<accession>Q8YPK1</accession>
<feature type="chain" id="PRO_0000132059" description="Small ribosomal subunit protein uS13">
    <location>
        <begin position="1"/>
        <end position="126"/>
    </location>
</feature>
<feature type="region of interest" description="Disordered" evidence="2">
    <location>
        <begin position="92"/>
        <end position="126"/>
    </location>
</feature>
<feature type="compositionally biased region" description="Basic residues" evidence="2">
    <location>
        <begin position="101"/>
        <end position="126"/>
    </location>
</feature>